<accession>Q72YF6</accession>
<gene>
    <name type="ordered locus">BCE_5065</name>
</gene>
<feature type="chain" id="PRO_0000364789" description="Ferredoxin--NADP reductase 2">
    <location>
        <begin position="1"/>
        <end position="331"/>
    </location>
</feature>
<feature type="binding site" evidence="1">
    <location>
        <position position="20"/>
    </location>
    <ligand>
        <name>FAD</name>
        <dbReference type="ChEBI" id="CHEBI:57692"/>
    </ligand>
</feature>
<feature type="binding site" evidence="1">
    <location>
        <position position="39"/>
    </location>
    <ligand>
        <name>FAD</name>
        <dbReference type="ChEBI" id="CHEBI:57692"/>
    </ligand>
</feature>
<feature type="binding site" evidence="1">
    <location>
        <position position="47"/>
    </location>
    <ligand>
        <name>FAD</name>
        <dbReference type="ChEBI" id="CHEBI:57692"/>
    </ligand>
</feature>
<feature type="binding site" evidence="1">
    <location>
        <position position="52"/>
    </location>
    <ligand>
        <name>FAD</name>
        <dbReference type="ChEBI" id="CHEBI:57692"/>
    </ligand>
</feature>
<feature type="binding site" evidence="1">
    <location>
        <position position="92"/>
    </location>
    <ligand>
        <name>FAD</name>
        <dbReference type="ChEBI" id="CHEBI:57692"/>
    </ligand>
</feature>
<feature type="binding site" evidence="1">
    <location>
        <position position="126"/>
    </location>
    <ligand>
        <name>FAD</name>
        <dbReference type="ChEBI" id="CHEBI:57692"/>
    </ligand>
</feature>
<feature type="binding site" evidence="1">
    <location>
        <position position="287"/>
    </location>
    <ligand>
        <name>FAD</name>
        <dbReference type="ChEBI" id="CHEBI:57692"/>
    </ligand>
</feature>
<feature type="binding site" evidence="1">
    <location>
        <position position="328"/>
    </location>
    <ligand>
        <name>FAD</name>
        <dbReference type="ChEBI" id="CHEBI:57692"/>
    </ligand>
</feature>
<name>FENR2_BACC1</name>
<reference key="1">
    <citation type="journal article" date="2004" name="Nucleic Acids Res.">
        <title>The genome sequence of Bacillus cereus ATCC 10987 reveals metabolic adaptations and a large plasmid related to Bacillus anthracis pXO1.</title>
        <authorList>
            <person name="Rasko D.A."/>
            <person name="Ravel J."/>
            <person name="Oekstad O.A."/>
            <person name="Helgason E."/>
            <person name="Cer R.Z."/>
            <person name="Jiang L."/>
            <person name="Shores K.A."/>
            <person name="Fouts D.E."/>
            <person name="Tourasse N.J."/>
            <person name="Angiuoli S.V."/>
            <person name="Kolonay J.F."/>
            <person name="Nelson W.C."/>
            <person name="Kolstoe A.-B."/>
            <person name="Fraser C.M."/>
            <person name="Read T.D."/>
        </authorList>
    </citation>
    <scope>NUCLEOTIDE SEQUENCE [LARGE SCALE GENOMIC DNA]</scope>
    <source>
        <strain>ATCC 10987 / NRS 248</strain>
    </source>
</reference>
<keyword id="KW-0274">FAD</keyword>
<keyword id="KW-0285">Flavoprotein</keyword>
<keyword id="KW-0521">NADP</keyword>
<keyword id="KW-0560">Oxidoreductase</keyword>
<evidence type="ECO:0000255" key="1">
    <source>
        <dbReference type="HAMAP-Rule" id="MF_01685"/>
    </source>
</evidence>
<comment type="catalytic activity">
    <reaction evidence="1">
        <text>2 reduced [2Fe-2S]-[ferredoxin] + NADP(+) + H(+) = 2 oxidized [2Fe-2S]-[ferredoxin] + NADPH</text>
        <dbReference type="Rhea" id="RHEA:20125"/>
        <dbReference type="Rhea" id="RHEA-COMP:10000"/>
        <dbReference type="Rhea" id="RHEA-COMP:10001"/>
        <dbReference type="ChEBI" id="CHEBI:15378"/>
        <dbReference type="ChEBI" id="CHEBI:33737"/>
        <dbReference type="ChEBI" id="CHEBI:33738"/>
        <dbReference type="ChEBI" id="CHEBI:57783"/>
        <dbReference type="ChEBI" id="CHEBI:58349"/>
        <dbReference type="EC" id="1.18.1.2"/>
    </reaction>
</comment>
<comment type="cofactor">
    <cofactor evidence="1">
        <name>FAD</name>
        <dbReference type="ChEBI" id="CHEBI:57692"/>
    </cofactor>
    <text evidence="1">Binds 1 FAD per subunit.</text>
</comment>
<comment type="subunit">
    <text evidence="1">Homodimer.</text>
</comment>
<comment type="similarity">
    <text evidence="1">Belongs to the ferredoxin--NADP reductase type 2 family.</text>
</comment>
<proteinExistence type="inferred from homology"/>
<sequence length="331" mass="36721">MKVAENQKVYDITIIGGGPTGLFTAFYGGMRQASVKIIESLPQLGGQLSALYPEKYIYDVAGFPKVRAQELVDNLKEQMKKFDPTVCLEEAVDTLEKQADGIFKLVTNKQTHYSKSVIITAGNGAFQPRRLELEGTAKYEKKNLHYFVDDMNKFAGKRVVVFGGGDSAVDWTMMLEPIADKVTIVHRRDKFRAHEHSVESLMNSRAEVSTPYVPVELIGDDKIEQVVLQHVKTEEKIIIDVDDVIVNYGFVSSLGPIKNWGLDIQKNSILVNSKMETNIPGIYAAGDICTYEGKVKLIACGFGEAPTAVNNAKAYFDPNAKLQPMHSSSMF</sequence>
<protein>
    <recommendedName>
        <fullName evidence="1">Ferredoxin--NADP reductase 2</fullName>
        <shortName evidence="1">FNR 2</shortName>
        <shortName evidence="1">Fd-NADP(+) reductase 2</shortName>
        <ecNumber evidence="1">1.18.1.2</ecNumber>
    </recommendedName>
</protein>
<organism>
    <name type="scientific">Bacillus cereus (strain ATCC 10987 / NRS 248)</name>
    <dbReference type="NCBI Taxonomy" id="222523"/>
    <lineage>
        <taxon>Bacteria</taxon>
        <taxon>Bacillati</taxon>
        <taxon>Bacillota</taxon>
        <taxon>Bacilli</taxon>
        <taxon>Bacillales</taxon>
        <taxon>Bacillaceae</taxon>
        <taxon>Bacillus</taxon>
        <taxon>Bacillus cereus group</taxon>
    </lineage>
</organism>
<dbReference type="EC" id="1.18.1.2" evidence="1"/>
<dbReference type="EMBL" id="AE017194">
    <property type="protein sequence ID" value="AAS43966.1"/>
    <property type="molecule type" value="Genomic_DNA"/>
</dbReference>
<dbReference type="SMR" id="Q72YF6"/>
<dbReference type="KEGG" id="bca:BCE_5065"/>
<dbReference type="HOGENOM" id="CLU_031864_5_5_9"/>
<dbReference type="Proteomes" id="UP000002527">
    <property type="component" value="Chromosome"/>
</dbReference>
<dbReference type="GO" id="GO:0004324">
    <property type="term" value="F:ferredoxin-NADP+ reductase activity"/>
    <property type="evidence" value="ECO:0007669"/>
    <property type="project" value="UniProtKB-UniRule"/>
</dbReference>
<dbReference type="GO" id="GO:0050660">
    <property type="term" value="F:flavin adenine dinucleotide binding"/>
    <property type="evidence" value="ECO:0007669"/>
    <property type="project" value="UniProtKB-UniRule"/>
</dbReference>
<dbReference type="GO" id="GO:0050661">
    <property type="term" value="F:NADP binding"/>
    <property type="evidence" value="ECO:0007669"/>
    <property type="project" value="UniProtKB-UniRule"/>
</dbReference>
<dbReference type="Gene3D" id="3.50.50.60">
    <property type="entry name" value="FAD/NAD(P)-binding domain"/>
    <property type="match status" value="2"/>
</dbReference>
<dbReference type="HAMAP" id="MF_01685">
    <property type="entry name" value="FENR2"/>
    <property type="match status" value="1"/>
</dbReference>
<dbReference type="InterPro" id="IPR036188">
    <property type="entry name" value="FAD/NAD-bd_sf"/>
</dbReference>
<dbReference type="InterPro" id="IPR023753">
    <property type="entry name" value="FAD/NAD-binding_dom"/>
</dbReference>
<dbReference type="InterPro" id="IPR022890">
    <property type="entry name" value="Fd--NADP_Rdtase_type_2"/>
</dbReference>
<dbReference type="InterPro" id="IPR050097">
    <property type="entry name" value="Ferredoxin-NADP_redctase_2"/>
</dbReference>
<dbReference type="PANTHER" id="PTHR48105">
    <property type="entry name" value="THIOREDOXIN REDUCTASE 1-RELATED-RELATED"/>
    <property type="match status" value="1"/>
</dbReference>
<dbReference type="Pfam" id="PF07992">
    <property type="entry name" value="Pyr_redox_2"/>
    <property type="match status" value="1"/>
</dbReference>
<dbReference type="PRINTS" id="PR00368">
    <property type="entry name" value="FADPNR"/>
</dbReference>
<dbReference type="PRINTS" id="PR00469">
    <property type="entry name" value="PNDRDTASEII"/>
</dbReference>
<dbReference type="SUPFAM" id="SSF51905">
    <property type="entry name" value="FAD/NAD(P)-binding domain"/>
    <property type="match status" value="1"/>
</dbReference>